<accession>Q72L31</accession>
<proteinExistence type="inferred from homology"/>
<reference key="1">
    <citation type="journal article" date="2004" name="Nat. Biotechnol.">
        <title>The genome sequence of the extreme thermophile Thermus thermophilus.</title>
        <authorList>
            <person name="Henne A."/>
            <person name="Brueggemann H."/>
            <person name="Raasch C."/>
            <person name="Wiezer A."/>
            <person name="Hartsch T."/>
            <person name="Liesegang H."/>
            <person name="Johann A."/>
            <person name="Lienard T."/>
            <person name="Gohl O."/>
            <person name="Martinez-Arias R."/>
            <person name="Jacobi C."/>
            <person name="Starkuviene V."/>
            <person name="Schlenczeck S."/>
            <person name="Dencker S."/>
            <person name="Huber R."/>
            <person name="Klenk H.-P."/>
            <person name="Kramer W."/>
            <person name="Merkl R."/>
            <person name="Gottschalk G."/>
            <person name="Fritz H.-J."/>
        </authorList>
    </citation>
    <scope>NUCLEOTIDE SEQUENCE [LARGE SCALE GENOMIC DNA]</scope>
    <source>
        <strain>ATCC BAA-163 / DSM 7039 / HB27</strain>
    </source>
</reference>
<comment type="function">
    <text evidence="1">Catalyzes the decarboxylation of four acetate groups of uroporphyrinogen-III to yield coproporphyrinogen-III.</text>
</comment>
<comment type="catalytic activity">
    <reaction evidence="1">
        <text>uroporphyrinogen III + 4 H(+) = coproporphyrinogen III + 4 CO2</text>
        <dbReference type="Rhea" id="RHEA:19865"/>
        <dbReference type="ChEBI" id="CHEBI:15378"/>
        <dbReference type="ChEBI" id="CHEBI:16526"/>
        <dbReference type="ChEBI" id="CHEBI:57308"/>
        <dbReference type="ChEBI" id="CHEBI:57309"/>
        <dbReference type="EC" id="4.1.1.37"/>
    </reaction>
</comment>
<comment type="pathway">
    <text evidence="1">Porphyrin-containing compound metabolism; protoporphyrin-IX biosynthesis; coproporphyrinogen-III from 5-aminolevulinate: step 4/4.</text>
</comment>
<comment type="subunit">
    <text evidence="1">Homodimer.</text>
</comment>
<comment type="subcellular location">
    <subcellularLocation>
        <location evidence="1">Cytoplasm</location>
    </subcellularLocation>
</comment>
<comment type="similarity">
    <text evidence="1">Belongs to the uroporphyrinogen decarboxylase family.</text>
</comment>
<comment type="sequence caution" evidence="2">
    <conflict type="erroneous initiation">
        <sequence resource="EMBL-CDS" id="AAS80580"/>
    </conflict>
</comment>
<gene>
    <name evidence="1" type="primary">hemE</name>
    <name type="ordered locus">TT_C0232</name>
</gene>
<evidence type="ECO:0000255" key="1">
    <source>
        <dbReference type="HAMAP-Rule" id="MF_00218"/>
    </source>
</evidence>
<evidence type="ECO:0000305" key="2"/>
<name>DCUP_THET2</name>
<dbReference type="EC" id="4.1.1.37" evidence="1"/>
<dbReference type="EMBL" id="AE017221">
    <property type="protein sequence ID" value="AAS80580.1"/>
    <property type="status" value="ALT_INIT"/>
    <property type="molecule type" value="Genomic_DNA"/>
</dbReference>
<dbReference type="RefSeq" id="WP_038039370.1">
    <property type="nucleotide sequence ID" value="NC_005835.1"/>
</dbReference>
<dbReference type="SMR" id="Q72L31"/>
<dbReference type="KEGG" id="tth:TT_C0232"/>
<dbReference type="eggNOG" id="COG0407">
    <property type="taxonomic scope" value="Bacteria"/>
</dbReference>
<dbReference type="HOGENOM" id="CLU_040933_0_1_0"/>
<dbReference type="OrthoDB" id="9806656at2"/>
<dbReference type="UniPathway" id="UPA00251">
    <property type="reaction ID" value="UER00321"/>
</dbReference>
<dbReference type="Proteomes" id="UP000000592">
    <property type="component" value="Chromosome"/>
</dbReference>
<dbReference type="GO" id="GO:0005829">
    <property type="term" value="C:cytosol"/>
    <property type="evidence" value="ECO:0007669"/>
    <property type="project" value="TreeGrafter"/>
</dbReference>
<dbReference type="GO" id="GO:0004853">
    <property type="term" value="F:uroporphyrinogen decarboxylase activity"/>
    <property type="evidence" value="ECO:0007669"/>
    <property type="project" value="UniProtKB-UniRule"/>
</dbReference>
<dbReference type="GO" id="GO:0006782">
    <property type="term" value="P:protoporphyrinogen IX biosynthetic process"/>
    <property type="evidence" value="ECO:0007669"/>
    <property type="project" value="UniProtKB-UniRule"/>
</dbReference>
<dbReference type="CDD" id="cd00717">
    <property type="entry name" value="URO-D"/>
    <property type="match status" value="1"/>
</dbReference>
<dbReference type="Gene3D" id="3.20.20.210">
    <property type="match status" value="1"/>
</dbReference>
<dbReference type="HAMAP" id="MF_00218">
    <property type="entry name" value="URO_D"/>
    <property type="match status" value="1"/>
</dbReference>
<dbReference type="InterPro" id="IPR038071">
    <property type="entry name" value="UROD/MetE-like_sf"/>
</dbReference>
<dbReference type="InterPro" id="IPR006361">
    <property type="entry name" value="Uroporphyrinogen_deCO2ase_HemE"/>
</dbReference>
<dbReference type="InterPro" id="IPR000257">
    <property type="entry name" value="Uroporphyrinogen_deCOase"/>
</dbReference>
<dbReference type="NCBIfam" id="TIGR01464">
    <property type="entry name" value="hemE"/>
    <property type="match status" value="1"/>
</dbReference>
<dbReference type="PANTHER" id="PTHR21091">
    <property type="entry name" value="METHYLTETRAHYDROFOLATE:HOMOCYSTEINE METHYLTRANSFERASE RELATED"/>
    <property type="match status" value="1"/>
</dbReference>
<dbReference type="PANTHER" id="PTHR21091:SF169">
    <property type="entry name" value="UROPORPHYRINOGEN DECARBOXYLASE"/>
    <property type="match status" value="1"/>
</dbReference>
<dbReference type="Pfam" id="PF01208">
    <property type="entry name" value="URO-D"/>
    <property type="match status" value="1"/>
</dbReference>
<dbReference type="SUPFAM" id="SSF51726">
    <property type="entry name" value="UROD/MetE-like"/>
    <property type="match status" value="1"/>
</dbReference>
<dbReference type="PROSITE" id="PS00906">
    <property type="entry name" value="UROD_1"/>
    <property type="match status" value="1"/>
</dbReference>
<dbReference type="PROSITE" id="PS00907">
    <property type="entry name" value="UROD_2"/>
    <property type="match status" value="1"/>
</dbReference>
<feature type="chain" id="PRO_0000325704" description="Uroporphyrinogen decarboxylase">
    <location>
        <begin position="1"/>
        <end position="341"/>
    </location>
</feature>
<feature type="binding site" evidence="1">
    <location>
        <begin position="26"/>
        <end position="30"/>
    </location>
    <ligand>
        <name>substrate</name>
    </ligand>
</feature>
<feature type="binding site" evidence="1">
    <location>
        <position position="75"/>
    </location>
    <ligand>
        <name>substrate</name>
    </ligand>
</feature>
<feature type="binding site" evidence="1">
    <location>
        <position position="150"/>
    </location>
    <ligand>
        <name>substrate</name>
    </ligand>
</feature>
<feature type="binding site" evidence="1">
    <location>
        <position position="205"/>
    </location>
    <ligand>
        <name>substrate</name>
    </ligand>
</feature>
<feature type="binding site" evidence="1">
    <location>
        <position position="318"/>
    </location>
    <ligand>
        <name>substrate</name>
    </ligand>
</feature>
<feature type="site" description="Transition state stabilizer" evidence="1">
    <location>
        <position position="75"/>
    </location>
</feature>
<keyword id="KW-0963">Cytoplasm</keyword>
<keyword id="KW-0210">Decarboxylase</keyword>
<keyword id="KW-0456">Lyase</keyword>
<keyword id="KW-0627">Porphyrin biosynthesis</keyword>
<organism>
    <name type="scientific">Thermus thermophilus (strain ATCC BAA-163 / DSM 7039 / HB27)</name>
    <dbReference type="NCBI Taxonomy" id="262724"/>
    <lineage>
        <taxon>Bacteria</taxon>
        <taxon>Thermotogati</taxon>
        <taxon>Deinococcota</taxon>
        <taxon>Deinococci</taxon>
        <taxon>Thermales</taxon>
        <taxon>Thermaceae</taxon>
        <taxon>Thermus</taxon>
    </lineage>
</organism>
<sequence length="341" mass="37784">MDLVNDLILRAARGEPTPRPPVWFMRQAGRYQKAYRKLRERYTLPEIVQNPEVCAEVTLLPVKALGVDAAILFADITTPLYGMGVDLSLVENKGPVIHNPVRDEKGVEALRPLVPEEAVPFVLETIRILKRELPVPLIGFAGAPFTLASYLVEGGPSRRFLRVKALMYGEEALWHRLMEKLTEAMARYLRAQAEAGADLLQVFDSWVGALSPADYRRYVKPHMERLFQSLRPAGVPVIHFGVGTMGLLEDMKEAGGDVLGLDHHTPLPWARALLGATPVQGNLDPAVLLAPKGVIRREVQRILKENGGKSGHIFNLGHGIVPETPEENVRYVVELIQEVAA</sequence>
<protein>
    <recommendedName>
        <fullName evidence="1">Uroporphyrinogen decarboxylase</fullName>
        <shortName evidence="1">UPD</shortName>
        <shortName evidence="1">URO-D</shortName>
        <ecNumber evidence="1">4.1.1.37</ecNumber>
    </recommendedName>
</protein>